<name>HCN2_MOUSE</name>
<sequence>MDARGGGGRPGDSPGTTPAPGPPPPPPPPAPPQPQPPPAPPPNPTTPSHPESADEPGPRARLCSRDSACTPGAAKGGANGECGRGEPQCSPEGPARGPKVSFSCRGAASGPSAAEEAGSEEAGPAGEPRGSQASFLQRQFGALLQPGVNKFSLRMFGSQKAVEREQERVKSAGAWIIHPYSDFRFYWDFTMLLFMVGNLIIIPVGITFFKDETTAPWIVFNVVSDTFFLMDLVLNFRTGIVIEDNTEIILDPEKIKKKYLRTWFVVDFVSSIPVDYIFLIVEKGIDSEVYKTARALRIVRFTKILSLLRLLRLSRLIRYIHQWEEIFHMTYDLASAVMRICNLISMMLLLCHWDGCLQFLVPMLQDFPSDCWVSINNMVNHSWSELYSFALFKAMSHMLCIGYGRQAPESMTDIWLTMLSMIVGATCYAMFIGHATALIQSLDSSRRQYQEKYKQVEQYMSFHKLPADFRQKIHDYYEHRYQGKMFDEDSILGELNGPLREEIVNFNCRKLVASMPLFANADPNFVTAMLTKLKFEVFQPGDYIIREGTIGKKMYFIQHGVVSVLTKGNKEMKLSDGSYFGEICLLTRGRRTASVRADTYCRLYSLSVDNFNEVLEEYPMMRRAFETVAIDRLDRIGKKNSILLHKVQHDLSSGVFNNQENAIIQEIVKYDREMVQQAELGQRVGLFPPPPPPQVTSAIATLQQAVAMSFCPQVARPLVGPLALGSPRLVRRAPPGPLPPAASPGPPAASPPAAPSSPRAPRTSPYGVPGSPATRVGPALPARRLSRASRPLSASQPSLPHGVPAPSPAASARPASSSTPRLGPAPTARTAAPSPDRRDSASPGAASGLDPLDSARSRLSSNL</sequence>
<protein>
    <recommendedName>
        <fullName>Potassium/sodium hyperpolarization-activated cyclic nucleotide-gated channel 2</fullName>
    </recommendedName>
    <alternativeName>
        <fullName>Brain cyclic nucleotide-gated channel 2</fullName>
        <shortName>BCNG-2</shortName>
    </alternativeName>
    <alternativeName>
        <fullName>Hyperpolarization-activated cation channel 1</fullName>
        <shortName>HAC-1</shortName>
    </alternativeName>
</protein>
<proteinExistence type="evidence at protein level"/>
<reference key="1">
    <citation type="journal article" date="1998" name="Nature">
        <title>A family of hyperpolarization-activated cation channels.</title>
        <authorList>
            <person name="Ludwig A."/>
            <person name="Zong X."/>
            <person name="Jeglitsch M."/>
            <person name="Hofmann F."/>
            <person name="Biel M."/>
        </authorList>
    </citation>
    <scope>NUCLEOTIDE SEQUENCE [MRNA]</scope>
    <scope>CHARACTERIZATION</scope>
    <source>
        <strain>BALB/cJ</strain>
    </source>
</reference>
<reference key="2">
    <citation type="journal article" date="1998" name="Cell">
        <title>Identification of a gene encoding a hyperpolarization-activated 'pacemaker' channel of brain.</title>
        <authorList>
            <person name="Santoro B."/>
            <person name="Liu D.T."/>
            <person name="Yao H."/>
            <person name="Bartsch D."/>
            <person name="Kandel E.R."/>
            <person name="Siegelbaum S.A."/>
            <person name="Tibbs G.R."/>
        </authorList>
    </citation>
    <scope>NUCLEOTIDE SEQUENCE [MRNA] OF 150-653</scope>
    <scope>TISSUE SPECIFICITY</scope>
    <source>
        <tissue>Brain</tissue>
    </source>
</reference>
<reference key="3">
    <citation type="journal article" date="2000" name="J. Biol. Chem.">
        <title>Functional roles of charged residues in the putative voltage sensor of the HCN2 pacemaker channel.</title>
        <authorList>
            <person name="Chen J."/>
            <person name="Mitcheson J.S."/>
            <person name="Lin M."/>
            <person name="Sanguinetti M.C."/>
        </authorList>
    </citation>
    <scope>FUNCTION</scope>
    <scope>SUBCELLULAR LOCATION</scope>
    <scope>MUTAGENESIS OF ASP-225; ASP-231; ASP-267; ASP-275; LYS-291; ARG-294; ARG-297; ARG-300; LYS-303; SER-306; ARG-309; ARG-312; ARG-315 AND ARG-318</scope>
</reference>
<reference key="4">
    <citation type="journal article" date="2001" name="Circ. Res.">
        <title>MinK-related peptide 1: a beta subunit for the HCN ion channel subunit family enhances expression and speeds activation.</title>
        <authorList>
            <person name="Yu H."/>
            <person name="Wu J."/>
            <person name="Potapova I."/>
            <person name="Wymore R.T."/>
            <person name="Holmes B."/>
            <person name="Zuckerman J."/>
            <person name="Pan Z."/>
            <person name="Wang H."/>
            <person name="Shi W."/>
            <person name="Robinson R.B."/>
            <person name="El-Maghrabi M.R."/>
            <person name="Benjamin W."/>
            <person name="Dixon J.E."/>
            <person name="McKinnon D."/>
            <person name="Cohen I.S."/>
            <person name="Wymore R."/>
        </authorList>
    </citation>
    <scope>INTERACTION WITH KCNE2</scope>
</reference>
<reference key="5">
    <citation type="journal article" date="2001" name="J. Biol. Chem.">
        <title>A single histidine residue determines the pH sensitivity of the pacemaker channel HCN2.</title>
        <authorList>
            <person name="Zong X."/>
            <person name="Stieber J."/>
            <person name="Ludwig A."/>
            <person name="Hofmann F."/>
            <person name="Biel M."/>
        </authorList>
    </citation>
    <scope>FUNCTION</scope>
    <scope>ACTIVITY REGULATION</scope>
    <scope>SUBCELLULAR LOCATION</scope>
    <scope>MUTAGENESIS OF HIS-321</scope>
</reference>
<reference key="6">
    <citation type="journal article" date="2001" name="Proc. Natl. Acad. Sci. U.S.A.">
        <title>The S4-S5 linker couples voltage sensing and activation of pacemaker channels.</title>
        <authorList>
            <person name="Chen J."/>
            <person name="Mitcheson J.S."/>
            <person name="Tristani-Firouzi M."/>
            <person name="Lin M."/>
            <person name="Sanguinetti M.C."/>
        </authorList>
    </citation>
    <scope>MUTAGENESIS OF ARG-318; GLU-324; TYR-331 AND ARG-339</scope>
</reference>
<reference key="7">
    <citation type="journal article" date="2001" name="Nature">
        <title>Molecular mechanism of cAMP modulation of HCN pacemaker channels.</title>
        <authorList>
            <person name="Wainger B.J."/>
            <person name="DeGennaro M."/>
            <person name="Santoro B."/>
            <person name="Siegelbaum S.A."/>
            <person name="Tibbs G.R."/>
        </authorList>
    </citation>
    <scope>FUNCTION</scope>
    <scope>TRANSPORTER ACTIVITY</scope>
    <scope>DOMAIN</scope>
</reference>
<reference key="8">
    <citation type="journal article" date="2002" name="J. Biol. Chem.">
        <title>Pacemaker channels produce an instantaneous current.</title>
        <authorList>
            <person name="Proenza C."/>
            <person name="Angoli D."/>
            <person name="Agranovich E."/>
            <person name="Macri V."/>
            <person name="Accili E.A."/>
        </authorList>
    </citation>
    <scope>FUNCTION</scope>
    <scope>MUTAGENESIS OF SER-306</scope>
</reference>
<reference key="9">
    <citation type="journal article" date="2002" name="J. Biol. Chem.">
        <title>Different roles for the cyclic nucleotide binding domain and amino terminus in assembly and expression of hyperpolarization-activated, cyclic nucleotide-gated channels.</title>
        <authorList>
            <person name="Proenza C."/>
            <person name="Tran N."/>
            <person name="Angoli D."/>
            <person name="Zahynacz K."/>
            <person name="Balcar P."/>
            <person name="Accili E.A."/>
        </authorList>
    </citation>
    <scope>FUNCTION</scope>
    <scope>SUBCELLULAR LOCATION</scope>
    <scope>INTERACTION WITH HCN1</scope>
</reference>
<reference key="10">
    <citation type="journal article" date="2002" name="J. Biol. Chem.">
        <title>A conserved domain in the NH2 terminus important for assembly and functional expression of pacemaker channels.</title>
        <authorList>
            <person name="Tran N."/>
            <person name="Proenza C."/>
            <person name="Macri V."/>
            <person name="Petigara F."/>
            <person name="Sloan E."/>
            <person name="Samler S."/>
            <person name="Accili E.A."/>
        </authorList>
    </citation>
    <scope>FUNCTION</scope>
    <scope>SUBUNIT</scope>
    <scope>SUBCELLULAR LOCATION</scope>
</reference>
<reference key="11">
    <citation type="journal article" date="2003" name="J. Biol. Chem.">
        <title>Role of subunit heteromerization and N-linked glycosylation in the formation of functional hyperpolarization-activated cyclic nucleotide-gated channels.</title>
        <authorList>
            <person name="Much B."/>
            <person name="Wahl-Schott C."/>
            <person name="Zong X."/>
            <person name="Schneider A."/>
            <person name="Baumann L."/>
            <person name="Moosmang S."/>
            <person name="Ludwig A."/>
            <person name="Biel M."/>
        </authorList>
    </citation>
    <scope>SUBCELLULAR LOCATION</scope>
    <scope>GLYCOSYLATION AT ASN-380</scope>
    <scope>MUTAGENESIS OF ASN-380</scope>
    <scope>INTERACTION WITH HCN1</scope>
</reference>
<reference key="12">
    <citation type="journal article" date="2010" name="Cell">
        <title>A tissue-specific atlas of mouse protein phosphorylation and expression.</title>
        <authorList>
            <person name="Huttlin E.L."/>
            <person name="Jedrychowski M.P."/>
            <person name="Elias J.E."/>
            <person name="Goswami T."/>
            <person name="Rad R."/>
            <person name="Beausoleil S.A."/>
            <person name="Villen J."/>
            <person name="Haas W."/>
            <person name="Sowa M.E."/>
            <person name="Gygi S.P."/>
        </authorList>
    </citation>
    <scope>PHOSPHORYLATION [LARGE SCALE ANALYSIS] AT SER-119; SER-743; SER-750; SER-757; SER-840; SER-842 AND SER-847</scope>
    <scope>IDENTIFICATION BY MASS SPECTROMETRY [LARGE SCALE ANALYSIS]</scope>
    <source>
        <tissue>Brain</tissue>
    </source>
</reference>
<reference key="13">
    <citation type="journal article" date="2011" name="PLoS ONE">
        <title>The cGMP-dependent protein kinase II Is an inhibitory modulator of the hyperpolarization-activated HCN2 channel.</title>
        <authorList>
            <person name="Hammelmann V."/>
            <person name="Zong X."/>
            <person name="Hofmann F."/>
            <person name="Michalakis S."/>
            <person name="Biel M."/>
        </authorList>
    </citation>
    <scope>PHOSPHORYLATION AT SER-641</scope>
</reference>
<reference key="14">
    <citation type="journal article" date="2003" name="EMBO J.">
        <title>Absence epilepsy and sinus dysrhythmia in mice lacking the pacemaker channel HCN2.</title>
        <authorList>
            <person name="Ludwig A."/>
            <person name="Budde T."/>
            <person name="Stieber J."/>
            <person name="Moosmang S."/>
            <person name="Wahl C."/>
            <person name="Holthoff K."/>
            <person name="Langebartels A."/>
            <person name="Wotjak C."/>
            <person name="Munsch T."/>
            <person name="Zong X."/>
            <person name="Feil S."/>
            <person name="Feil R."/>
            <person name="Lancel M."/>
            <person name="Chien K.R."/>
            <person name="Konnerth A."/>
            <person name="Pape H.C."/>
            <person name="Biel M."/>
            <person name="Hofmann F."/>
        </authorList>
    </citation>
    <scope>DISRUPTION PHENOTYPE</scope>
    <scope>FUNCTION</scope>
</reference>
<reference key="15">
    <citation type="journal article" date="2006" name="Neuron">
        <title>Pacemaking by HCN channels requires interaction with phosphoinositides.</title>
        <authorList>
            <person name="Zolles G."/>
            <person name="Kloecker N."/>
            <person name="Wenzel D."/>
            <person name="Weisser-Thomas J."/>
            <person name="Fleischmann B.K."/>
            <person name="Roeper J."/>
            <person name="Fakler B."/>
        </authorList>
    </citation>
    <scope>FUNCTION</scope>
    <scope>ACTIVITY REGULATION</scope>
</reference>
<reference key="16">
    <citation type="journal article" date="2011" name="Science">
        <title>HCN2 ion channels play a central role in inflammatory and neuropathic pain.</title>
        <authorList>
            <person name="Emery E.C."/>
            <person name="Young G.T."/>
            <person name="Berrocoso E.M."/>
            <person name="Chen L."/>
            <person name="McNaughton P.A."/>
        </authorList>
    </citation>
    <scope>DISRUPTION PHENOTYPE</scope>
    <scope>FUNCTION</scope>
</reference>
<reference key="17">
    <citation type="journal article" date="2012" name="Structure">
        <title>Local and global interpretations of a disease-causing mutation near the ligand entry path in hyperpolarization-activated cAMP-gated channel.</title>
        <authorList>
            <person name="Xu X."/>
            <person name="Marni F."/>
            <person name="Wu S."/>
            <person name="Su Z."/>
            <person name="Musayev F."/>
            <person name="Shrestha S."/>
            <person name="Xie C."/>
            <person name="Gao W."/>
            <person name="Liu Q."/>
            <person name="Zhou L."/>
        </authorList>
    </citation>
    <scope>FUNCTION</scope>
    <scope>ACTIVITY REGULATION</scope>
    <scope>SUBCELLULAR LOCATION</scope>
    <scope>MUTAGENESIS OF SER-594</scope>
</reference>
<reference key="18">
    <citation type="journal article" date="2014" name="Mol. Cell. Proteomics">
        <title>Immunoaffinity enrichment and mass spectrometry analysis of protein methylation.</title>
        <authorList>
            <person name="Guo A."/>
            <person name="Gu H."/>
            <person name="Zhou J."/>
            <person name="Mulhern D."/>
            <person name="Wang Y."/>
            <person name="Lee K.A."/>
            <person name="Yang V."/>
            <person name="Aguiar M."/>
            <person name="Kornhauser J."/>
            <person name="Jia X."/>
            <person name="Ren J."/>
            <person name="Beausoleil S.A."/>
            <person name="Silva J.C."/>
            <person name="Vemulapalli V."/>
            <person name="Bedford M.T."/>
            <person name="Comb M.J."/>
        </authorList>
    </citation>
    <scope>METHYLATION [LARGE SCALE ANALYSIS] AT ARG-728</scope>
    <scope>IDENTIFICATION BY MASS SPECTROMETRY [LARGE SCALE ANALYSIS]</scope>
    <source>
        <tissue>Brain</tissue>
    </source>
</reference>
<reference key="19">
    <citation type="journal article" date="2024" name="Nat. Commun.">
        <title>A high affinity switch for cAMP in the HCN pacemaker channels.</title>
        <authorList>
            <person name="Porro A."/>
            <person name="Saponaro A."/>
            <person name="Castelli R."/>
            <person name="Introini B."/>
            <person name="Hafez Alkotob A."/>
            <person name="Ranjbari G."/>
            <person name="Enke U."/>
            <person name="Kusch J."/>
            <person name="Benndorf K."/>
            <person name="Santoro B."/>
            <person name="DiFrancesco D."/>
            <person name="Thiel G."/>
            <person name="Moroni A."/>
        </authorList>
    </citation>
    <scope>FUNCTION</scope>
    <scope>MUTAGENESIS OF ASP-671</scope>
</reference>
<reference key="20">
    <citation type="journal article" date="2003" name="Nature">
        <title>Structural basis for modulation and agonist specificity of HCN pacemaker channels.</title>
        <authorList>
            <person name="Zagotta W.N."/>
            <person name="Olivier N.B."/>
            <person name="Black K.D."/>
            <person name="Young E.C."/>
            <person name="Olson R."/>
            <person name="Gouaux E."/>
        </authorList>
    </citation>
    <scope>X-RAY CRYSTALLOGRAPHY (1.9 ANGSTROMS) OF 443-643 IN COMPLEXES WITH CAMP AND CGMP</scope>
    <scope>FUNCTION</scope>
    <scope>ACTIVITY REGULATION</scope>
    <scope>NUCLEOTIDE-BINDING</scope>
    <scope>SUBUNIT</scope>
</reference>
<reference key="21">
    <citation type="journal article" date="2007" name="Structure">
        <title>Structure and rearrangements in the carboxy-terminal region of SpIH channels.</title>
        <authorList>
            <person name="Flynn G.E."/>
            <person name="Black K.D."/>
            <person name="Islas L.D."/>
            <person name="Sankaran B."/>
            <person name="Zagotta W.N."/>
        </authorList>
    </citation>
    <scope>X-RAY CRYSTALLOGRAPHY (2.25 ANGSTROMS) OF 443-640</scope>
    <scope>FUNCTION</scope>
    <scope>ACTIVITY REGULATION</scope>
    <scope>SUBCELLULAR LOCATION</scope>
    <scope>NUCLEOTIDE-BINDING</scope>
</reference>
<reference evidence="31" key="22">
    <citation type="journal article" date="2008" name="J. Biol. Chem.">
        <title>C-terminal movement during gating in cyclic nucleotide-modulated channels.</title>
        <authorList>
            <person name="Craven K.B."/>
            <person name="Olivier N.B."/>
            <person name="Zagotta W.N."/>
        </authorList>
    </citation>
    <scope>X-RAY CRYSTALLOGRAPHY (1.65 ANGSTROMS) OF 443-640 IN COMPLEX WITH CAMP</scope>
    <scope>SUBUNIT</scope>
    <scope>NUCLEOTIDE-BINDING</scope>
</reference>
<reference evidence="32 33" key="23">
    <citation type="journal article" date="2009" name="Nat. Methods">
        <title>Mapping the structure and conformational movements of proteins with transition metal ion FRET.</title>
        <authorList>
            <person name="Taraska J.W."/>
            <person name="Puljung M.C."/>
            <person name="Olivier N.B."/>
            <person name="Flynn G.E."/>
            <person name="Zagotta W.N."/>
        </authorList>
    </citation>
    <scope>X-RAY CRYSTALLOGRAPHY (1.90 ANGSTROMS) OF 443-640 IN COMPLEX WITH CAMP</scope>
    <scope>NUCLEOTIDE-BINDING</scope>
</reference>
<reference key="24">
    <citation type="journal article" date="2012" name="Proc. Natl. Acad. Sci. U.S.A.">
        <title>Structure and stoichiometry of an accessory subunit TRIP8b interaction with hyperpolarization-activated cyclic nucleotide-gated channels.</title>
        <authorList>
            <person name="Bankston J.R."/>
            <person name="Camp S.S."/>
            <person name="DiMaio F."/>
            <person name="Lewis A.S."/>
            <person name="Chetkovich D.M."/>
            <person name="Zagotta W.N."/>
        </authorList>
    </citation>
    <scope>X-RAY CRYSTALLOGRAPHY (3.0 ANGSTROMS) OF 857-863 IN COMPLEX WITH PEX5L</scope>
    <scope>SUBUNIT</scope>
</reference>
<reference evidence="34 35 36 37 38" key="25">
    <citation type="journal article" date="2016" name="Structure">
        <title>Cyclic Purine and Pyrimidine Nucleotides Bind to the HCN2 Ion Channel and Variably Promote C-Terminal Domain Interactions and Opening.</title>
        <authorList>
            <person name="Ng L.C.T."/>
            <person name="Putrenko I."/>
            <person name="Baronas V."/>
            <person name="Van Petegem F."/>
            <person name="Accili E.A."/>
        </authorList>
    </citation>
    <scope>X-RAY CRYSTALLOGRAPHY (1.77 ANGSTROMS) OF 443-643 IN COMPLEX WITH CAMP ANALOGS</scope>
    <scope>FUNCTION</scope>
    <scope>ACTIVITY REGULATION</scope>
</reference>
<keyword id="KW-0002">3D-structure</keyword>
<keyword id="KW-0924">Ammonia transport</keyword>
<keyword id="KW-0114">cAMP</keyword>
<keyword id="KW-0116">cAMP-binding</keyword>
<keyword id="KW-1003">Cell membrane</keyword>
<keyword id="KW-0325">Glycoprotein</keyword>
<keyword id="KW-0407">Ion channel</keyword>
<keyword id="KW-0406">Ion transport</keyword>
<keyword id="KW-1071">Ligand-gated ion channel</keyword>
<keyword id="KW-0449">Lipoprotein</keyword>
<keyword id="KW-0472">Membrane</keyword>
<keyword id="KW-0488">Methylation</keyword>
<keyword id="KW-0547">Nucleotide-binding</keyword>
<keyword id="KW-0564">Palmitate</keyword>
<keyword id="KW-0597">Phosphoprotein</keyword>
<keyword id="KW-0630">Potassium</keyword>
<keyword id="KW-0631">Potassium channel</keyword>
<keyword id="KW-0633">Potassium transport</keyword>
<keyword id="KW-1185">Reference proteome</keyword>
<keyword id="KW-0915">Sodium</keyword>
<keyword id="KW-0894">Sodium channel</keyword>
<keyword id="KW-0739">Sodium transport</keyword>
<keyword id="KW-0812">Transmembrane</keyword>
<keyword id="KW-1133">Transmembrane helix</keyword>
<keyword id="KW-0813">Transport</keyword>
<keyword id="KW-0851">Voltage-gated channel</keyword>
<comment type="function">
    <text evidence="2 6 7 9 11 12 13 16 18 21 22 24">Hyperpolarization-activated ion channel exhibiting weak selectivity for potassium over sodium ions. Contributes to the native pacemaker currents in heart (If) and in neurons (Ih) (PubMed:10962006, PubMed:11096117, PubMed:11459060, PubMed:11741901, PubMed:12034718, PubMed:12193608, PubMed:12968185, PubMed:17562314, PubMed:21347269, PubMed:21903816, PubMed:23103389). Can also transport ammonium in the distal nephron (By similarity). Involved in the initiation of neuropathic pain in sensory neurons (PubMed:21903816).</text>
</comment>
<comment type="catalytic activity">
    <reaction evidence="3">
        <text>Na(+)(in) = Na(+)(out)</text>
        <dbReference type="Rhea" id="RHEA:34963"/>
        <dbReference type="ChEBI" id="CHEBI:29101"/>
    </reaction>
</comment>
<comment type="catalytic activity">
    <reaction evidence="3">
        <text>K(+)(in) = K(+)(out)</text>
        <dbReference type="Rhea" id="RHEA:29463"/>
        <dbReference type="ChEBI" id="CHEBI:29103"/>
    </reaction>
</comment>
<comment type="catalytic activity">
    <reaction evidence="2">
        <text>NH4(+)(in) = NH4(+)(out)</text>
        <dbReference type="Rhea" id="RHEA:28747"/>
        <dbReference type="ChEBI" id="CHEBI:28938"/>
    </reaction>
</comment>
<comment type="activity regulation">
    <text evidence="3 7 16 17 18 24 25">Activated by cAMP, and at 10-100 times higher concentrations, also by cGMP (PubMed:12968185, PubMed:17562314, PubMed:23103389, PubMed:27568927). cAMP binding causes a conformation change that leads to the assembly of an active tetramer and channel opening (PubMed:12968185, PubMed:27568927). In the absence of cAMP, the C-terminal region is thought to exert a tonic inhibition on the pore when HCN2 is in a non-tetrameric form (By similarity). Channel activity is modulated by intracellular chloride ions and pH; acidic pH shifts the activation to more negative voltages (PubMed:11096117). Phosphatidylinositol-4,5- bisphosphate (PIP(2)) acts as a ligand that allosterically opens HCN2 by shifting voltage-dependent channel activation toward depolarized potentials (PubMed:17178405). Inhibited by extracellular cesium ions (By similarity).</text>
</comment>
<comment type="subunit">
    <text evidence="8 12 15 16 19 20 23 29">Homotetramer (Probable) (PubMed:12968185, PubMed:18367452, PubMed:19525958). The channel is composed of a homo- or heterotetrameric complex of pore-forming subunits (PubMed:12034718, PubMed:12928435, PubMed:12968185, PubMed:18367452). Heterotetramer with HCN1 (PubMed:12034718, PubMed:12928435). Forms an obligate 4:4 complex with accessory subunit PEX5L; regulates HCN2 cell-surface expression and cyclic nucleotide dependence (PubMed:22550182). Interacts with KCNE2 (PubMed:11420311).</text>
</comment>
<comment type="interaction">
    <interactant intactId="EBI-771231">
        <id>O88703</id>
    </interactant>
    <interactant intactId="EBI-16150786">
        <id>Q8IYB4-6</id>
        <label>PEX5L</label>
    </interactant>
    <organismsDiffer>true</organismsDiffer>
    <experiments>18</experiments>
</comment>
<comment type="interaction">
    <interactant intactId="EBI-771231">
        <id>O88703</id>
    </interactant>
    <interactant intactId="EBI-848039">
        <id>P00523</id>
        <label>SRC</label>
    </interactant>
    <organismsDiffer>true</organismsDiffer>
    <experiments>5</experiments>
</comment>
<comment type="subcellular location">
    <subcellularLocation>
        <location evidence="6 7 12 13 15 18 24">Cell membrane</location>
        <topology evidence="4">Multi-pass membrane protein</topology>
    </subcellularLocation>
</comment>
<comment type="tissue specificity">
    <text evidence="27">Highly expressed in brain. Detected at low levels in heart, in ventricle, atrium and in sinoatrial node (SAN).</text>
</comment>
<comment type="domain">
    <text evidence="1">The segment S4 is the voltage-sensor and is characterized by a series of positively charged amino acids at every third position. The ion-conducting pore region is between segment S5 and S6.</text>
</comment>
<comment type="domain">
    <text evidence="9">The cytosolic C-terminal domain contains the cyclic nucleotide-binding domain (CNBD), which mediates modulation by cyclic nucleotides.</text>
</comment>
<comment type="PTM">
    <text evidence="3">S-palmitoylated.</text>
</comment>
<comment type="PTM">
    <text evidence="15">N-glycosylated; required for cell surface trafficking of HCN2.</text>
</comment>
<comment type="PTM">
    <text evidence="21">Phosphorylation at Ser-641 by PRKG2 shifts the voltage-dependence to more negative voltages, hence counteracting the stimulatory effect of cGMP on gating.</text>
</comment>
<comment type="disruption phenotype">
    <text evidence="14 22">Hcn2-/- mice exhibit decreased body weight, behavioral/neurological abnormalities and tremors or absence seizures. Hcn2-null mice also displayed cardiac sinus dysrhythmia, a reduction of the sinoatrial hyperpolarization-activated cation current and a shift of the maximum diastolic potential to hyperpolarized values (PubMed:12514127). Mice in which Hcn2 is specifically deleted in nociceptors expressing SCN10A/Na(V)1.8 have normal pain thresholds, but inflammation do not cause hyperalgesia to heat stimuli. After a nerve lesion, these mice show no neuropathic pain in response to thermal or mechanical stimuli (PubMed:21903816).</text>
</comment>
<comment type="similarity">
    <text evidence="28">Belongs to the potassium channel HCN family.</text>
</comment>
<accession>O88703</accession>
<accession>O70506</accession>
<dbReference type="EMBL" id="AJ225122">
    <property type="protein sequence ID" value="CAA12406.1"/>
    <property type="molecule type" value="mRNA"/>
</dbReference>
<dbReference type="EMBL" id="AF064873">
    <property type="protein sequence ID" value="AAC40125.1"/>
    <property type="molecule type" value="mRNA"/>
</dbReference>
<dbReference type="CCDS" id="CCDS23986.1"/>
<dbReference type="RefSeq" id="NP_032252.1">
    <property type="nucleotide sequence ID" value="NM_008226.2"/>
</dbReference>
<dbReference type="PDB" id="1Q3E">
    <property type="method" value="X-ray"/>
    <property type="resolution" value="1.90 A"/>
    <property type="chains" value="A/B=443-645"/>
</dbReference>
<dbReference type="PDB" id="1Q43">
    <property type="method" value="X-ray"/>
    <property type="resolution" value="2.00 A"/>
    <property type="chains" value="A/B=443-645"/>
</dbReference>
<dbReference type="PDB" id="1Q5O">
    <property type="method" value="X-ray"/>
    <property type="resolution" value="2.30 A"/>
    <property type="chains" value="A=443-645"/>
</dbReference>
<dbReference type="PDB" id="2Q0A">
    <property type="method" value="X-ray"/>
    <property type="resolution" value="2.25 A"/>
    <property type="chains" value="A/B=443-640"/>
</dbReference>
<dbReference type="PDB" id="3BPZ">
    <property type="method" value="X-ray"/>
    <property type="resolution" value="1.65 A"/>
    <property type="chains" value="A/B/C/D=443-640"/>
</dbReference>
<dbReference type="PDB" id="3ETQ">
    <property type="method" value="X-ray"/>
    <property type="resolution" value="1.90 A"/>
    <property type="chains" value="A/B=443-640"/>
</dbReference>
<dbReference type="PDB" id="3FFQ">
    <property type="method" value="X-ray"/>
    <property type="resolution" value="2.40 A"/>
    <property type="chains" value="A/B=443-640"/>
</dbReference>
<dbReference type="PDB" id="4EQF">
    <property type="method" value="X-ray"/>
    <property type="resolution" value="3.00 A"/>
    <property type="chains" value="B=857-863"/>
</dbReference>
<dbReference type="PDB" id="5JON">
    <property type="method" value="X-ray"/>
    <property type="resolution" value="2.04 A"/>
    <property type="chains" value="A/B=494-640"/>
</dbReference>
<dbReference type="PDB" id="5KHG">
    <property type="method" value="X-ray"/>
    <property type="resolution" value="2.24 A"/>
    <property type="chains" value="A=443-643"/>
</dbReference>
<dbReference type="PDB" id="5KHH">
    <property type="method" value="X-ray"/>
    <property type="resolution" value="1.77 A"/>
    <property type="chains" value="A=443-643"/>
</dbReference>
<dbReference type="PDB" id="5KHI">
    <property type="method" value="X-ray"/>
    <property type="resolution" value="2.10 A"/>
    <property type="chains" value="A=443-643"/>
</dbReference>
<dbReference type="PDB" id="5KHJ">
    <property type="method" value="X-ray"/>
    <property type="resolution" value="2.01 A"/>
    <property type="chains" value="A/B=443-643"/>
</dbReference>
<dbReference type="PDB" id="5KHK">
    <property type="method" value="X-ray"/>
    <property type="resolution" value="2.07 A"/>
    <property type="chains" value="A=443-643"/>
</dbReference>
<dbReference type="PDBsum" id="1Q3E"/>
<dbReference type="PDBsum" id="1Q43"/>
<dbReference type="PDBsum" id="1Q5O"/>
<dbReference type="PDBsum" id="2Q0A"/>
<dbReference type="PDBsum" id="3BPZ"/>
<dbReference type="PDBsum" id="3ETQ"/>
<dbReference type="PDBsum" id="3FFQ"/>
<dbReference type="PDBsum" id="4EQF"/>
<dbReference type="PDBsum" id="5JON"/>
<dbReference type="PDBsum" id="5KHG"/>
<dbReference type="PDBsum" id="5KHH"/>
<dbReference type="PDBsum" id="5KHI"/>
<dbReference type="PDBsum" id="5KHJ"/>
<dbReference type="PDBsum" id="5KHK"/>
<dbReference type="BMRB" id="O88703"/>
<dbReference type="SMR" id="O88703"/>
<dbReference type="BioGRID" id="200253">
    <property type="interactions" value="10"/>
</dbReference>
<dbReference type="ComplexPortal" id="CPX-142">
    <property type="entry name" value="HCN2 channel complex"/>
</dbReference>
<dbReference type="CORUM" id="O88703"/>
<dbReference type="DIP" id="DIP-29326N"/>
<dbReference type="FunCoup" id="O88703">
    <property type="interactions" value="524"/>
</dbReference>
<dbReference type="IntAct" id="O88703">
    <property type="interactions" value="6"/>
</dbReference>
<dbReference type="MINT" id="O88703"/>
<dbReference type="STRING" id="10090.ENSMUSP00000097113"/>
<dbReference type="BindingDB" id="O88703"/>
<dbReference type="ChEMBL" id="CHEMBL1250408"/>
<dbReference type="DrugCentral" id="O88703"/>
<dbReference type="GuidetoPHARMACOLOGY" id="401"/>
<dbReference type="GlyCosmos" id="O88703">
    <property type="glycosylation" value="1 site, No reported glycans"/>
</dbReference>
<dbReference type="GlyGen" id="O88703">
    <property type="glycosylation" value="4 sites, 1 O-linked glycan (2 sites)"/>
</dbReference>
<dbReference type="iPTMnet" id="O88703"/>
<dbReference type="PhosphoSitePlus" id="O88703"/>
<dbReference type="SwissPalm" id="O88703"/>
<dbReference type="PaxDb" id="10090-ENSMUSP00000097113"/>
<dbReference type="ProteomicsDB" id="269770"/>
<dbReference type="ABCD" id="O88703">
    <property type="antibodies" value="1 sequenced antibody"/>
</dbReference>
<dbReference type="Antibodypedia" id="22327">
    <property type="antibodies" value="201 antibodies from 32 providers"/>
</dbReference>
<dbReference type="DNASU" id="15166"/>
<dbReference type="Ensembl" id="ENSMUST00000099513.8">
    <property type="protein sequence ID" value="ENSMUSP00000097113.2"/>
    <property type="gene ID" value="ENSMUSG00000020331.11"/>
</dbReference>
<dbReference type="GeneID" id="15166"/>
<dbReference type="KEGG" id="mmu:15166"/>
<dbReference type="UCSC" id="uc007fzn.1">
    <property type="organism name" value="mouse"/>
</dbReference>
<dbReference type="AGR" id="MGI:1298210"/>
<dbReference type="CTD" id="610"/>
<dbReference type="MGI" id="MGI:1298210">
    <property type="gene designation" value="Hcn2"/>
</dbReference>
<dbReference type="VEuPathDB" id="HostDB:ENSMUSG00000020331"/>
<dbReference type="eggNOG" id="KOG0498">
    <property type="taxonomic scope" value="Eukaryota"/>
</dbReference>
<dbReference type="GeneTree" id="ENSGT00940000156523"/>
<dbReference type="HOGENOM" id="CLU_005746_15_1_1"/>
<dbReference type="InParanoid" id="O88703"/>
<dbReference type="OMA" id="YFVQHGC"/>
<dbReference type="OrthoDB" id="421226at2759"/>
<dbReference type="PhylomeDB" id="O88703"/>
<dbReference type="TreeFam" id="TF318250"/>
<dbReference type="Reactome" id="R-MMU-1296061">
    <property type="pathway name" value="HCN channels"/>
</dbReference>
<dbReference type="BioGRID-ORCS" id="15166">
    <property type="hits" value="1 hit in 80 CRISPR screens"/>
</dbReference>
<dbReference type="CD-CODE" id="CE726F99">
    <property type="entry name" value="Postsynaptic density"/>
</dbReference>
<dbReference type="EvolutionaryTrace" id="O88703"/>
<dbReference type="PRO" id="PR:O88703"/>
<dbReference type="Proteomes" id="UP000000589">
    <property type="component" value="Chromosome 10"/>
</dbReference>
<dbReference type="RNAct" id="O88703">
    <property type="molecule type" value="protein"/>
</dbReference>
<dbReference type="Bgee" id="ENSMUSG00000020331">
    <property type="expression patterns" value="Expressed in perirhinal cortex and 106 other cell types or tissues"/>
</dbReference>
<dbReference type="GO" id="GO:0030424">
    <property type="term" value="C:axon"/>
    <property type="evidence" value="ECO:0007669"/>
    <property type="project" value="Ensembl"/>
</dbReference>
<dbReference type="GO" id="GO:0032590">
    <property type="term" value="C:dendrite membrane"/>
    <property type="evidence" value="ECO:0007669"/>
    <property type="project" value="Ensembl"/>
</dbReference>
<dbReference type="GO" id="GO:0043198">
    <property type="term" value="C:dendritic shaft"/>
    <property type="evidence" value="ECO:0007669"/>
    <property type="project" value="Ensembl"/>
</dbReference>
<dbReference type="GO" id="GO:0098855">
    <property type="term" value="C:HCN channel complex"/>
    <property type="evidence" value="ECO:0007669"/>
    <property type="project" value="Ensembl"/>
</dbReference>
<dbReference type="GO" id="GO:0016020">
    <property type="term" value="C:membrane"/>
    <property type="evidence" value="ECO:0000314"/>
    <property type="project" value="MGI"/>
</dbReference>
<dbReference type="GO" id="GO:0043025">
    <property type="term" value="C:neuronal cell body"/>
    <property type="evidence" value="ECO:0007669"/>
    <property type="project" value="Ensembl"/>
</dbReference>
<dbReference type="GO" id="GO:0005886">
    <property type="term" value="C:plasma membrane"/>
    <property type="evidence" value="ECO:0000250"/>
    <property type="project" value="UniProtKB"/>
</dbReference>
<dbReference type="GO" id="GO:0030552">
    <property type="term" value="F:cAMP binding"/>
    <property type="evidence" value="ECO:0007669"/>
    <property type="project" value="UniProtKB-KW"/>
</dbReference>
<dbReference type="GO" id="GO:0042802">
    <property type="term" value="F:identical protein binding"/>
    <property type="evidence" value="ECO:0007669"/>
    <property type="project" value="Ensembl"/>
</dbReference>
<dbReference type="GO" id="GO:0005222">
    <property type="term" value="F:intracellularly cAMP-activated cation channel activity"/>
    <property type="evidence" value="ECO:0000250"/>
    <property type="project" value="UniProtKB"/>
</dbReference>
<dbReference type="GO" id="GO:0060090">
    <property type="term" value="F:molecular adaptor activity"/>
    <property type="evidence" value="ECO:0007669"/>
    <property type="project" value="Ensembl"/>
</dbReference>
<dbReference type="GO" id="GO:0030165">
    <property type="term" value="F:PDZ domain binding"/>
    <property type="evidence" value="ECO:0007669"/>
    <property type="project" value="Ensembl"/>
</dbReference>
<dbReference type="GO" id="GO:0044877">
    <property type="term" value="F:protein-containing complex binding"/>
    <property type="evidence" value="ECO:0007669"/>
    <property type="project" value="Ensembl"/>
</dbReference>
<dbReference type="GO" id="GO:0005249">
    <property type="term" value="F:voltage-gated potassium channel activity"/>
    <property type="evidence" value="ECO:0000250"/>
    <property type="project" value="UniProtKB"/>
</dbReference>
<dbReference type="GO" id="GO:0005248">
    <property type="term" value="F:voltage-gated sodium channel activity"/>
    <property type="evidence" value="ECO:0007669"/>
    <property type="project" value="Ensembl"/>
</dbReference>
<dbReference type="GO" id="GO:0072488">
    <property type="term" value="P:ammonium transmembrane transport"/>
    <property type="evidence" value="ECO:0000250"/>
    <property type="project" value="UniProtKB"/>
</dbReference>
<dbReference type="GO" id="GO:1904045">
    <property type="term" value="P:cellular response to aldosterone"/>
    <property type="evidence" value="ECO:0007669"/>
    <property type="project" value="Ensembl"/>
</dbReference>
<dbReference type="GO" id="GO:0071320">
    <property type="term" value="P:cellular response to cAMP"/>
    <property type="evidence" value="ECO:0000250"/>
    <property type="project" value="UniProtKB"/>
</dbReference>
<dbReference type="GO" id="GO:0071321">
    <property type="term" value="P:cellular response to cGMP"/>
    <property type="evidence" value="ECO:0007669"/>
    <property type="project" value="Ensembl"/>
</dbReference>
<dbReference type="GO" id="GO:1990573">
    <property type="term" value="P:potassium ion import across plasma membrane"/>
    <property type="evidence" value="ECO:0007669"/>
    <property type="project" value="Ensembl"/>
</dbReference>
<dbReference type="GO" id="GO:0071805">
    <property type="term" value="P:potassium ion transmembrane transport"/>
    <property type="evidence" value="ECO:0000250"/>
    <property type="project" value="UniProtKB"/>
</dbReference>
<dbReference type="GO" id="GO:0042391">
    <property type="term" value="P:regulation of membrane potential"/>
    <property type="evidence" value="ECO:0000314"/>
    <property type="project" value="MGI"/>
</dbReference>
<dbReference type="GO" id="GO:0009410">
    <property type="term" value="P:response to xenobiotic stimulus"/>
    <property type="evidence" value="ECO:0007669"/>
    <property type="project" value="Ensembl"/>
</dbReference>
<dbReference type="GO" id="GO:0098719">
    <property type="term" value="P:sodium ion import across plasma membrane"/>
    <property type="evidence" value="ECO:0007669"/>
    <property type="project" value="Ensembl"/>
</dbReference>
<dbReference type="CDD" id="cd00038">
    <property type="entry name" value="CAP_ED"/>
    <property type="match status" value="1"/>
</dbReference>
<dbReference type="FunFam" id="1.10.287.70:FF:000031">
    <property type="entry name" value="Potassium/sodium hyperpolarization-activated cyclic nucleotide-gated channel 1, putative"/>
    <property type="match status" value="1"/>
</dbReference>
<dbReference type="FunFam" id="1.10.287.630:FF:000002">
    <property type="entry name" value="Potassium/sodium hyperpolarization-activated cyclic nucleotide-gated channel 4"/>
    <property type="match status" value="1"/>
</dbReference>
<dbReference type="FunFam" id="2.60.120.10:FF:000007">
    <property type="entry name" value="Putative potassium/sodium hyperpolarization-activated cyclic nucleotide-gated channel 2"/>
    <property type="match status" value="1"/>
</dbReference>
<dbReference type="Gene3D" id="1.10.287.70">
    <property type="match status" value="1"/>
</dbReference>
<dbReference type="Gene3D" id="1.10.287.630">
    <property type="entry name" value="Helix hairpin bin"/>
    <property type="match status" value="1"/>
</dbReference>
<dbReference type="Gene3D" id="2.60.120.10">
    <property type="entry name" value="Jelly Rolls"/>
    <property type="match status" value="1"/>
</dbReference>
<dbReference type="InterPro" id="IPR018488">
    <property type="entry name" value="cNMP-bd_CS"/>
</dbReference>
<dbReference type="InterPro" id="IPR000595">
    <property type="entry name" value="cNMP-bd_dom"/>
</dbReference>
<dbReference type="InterPro" id="IPR018490">
    <property type="entry name" value="cNMP-bd_dom_sf"/>
</dbReference>
<dbReference type="InterPro" id="IPR005821">
    <property type="entry name" value="Ion_trans_dom"/>
</dbReference>
<dbReference type="InterPro" id="IPR013621">
    <property type="entry name" value="Ion_trans_N"/>
</dbReference>
<dbReference type="InterPro" id="IPR051413">
    <property type="entry name" value="K/Na_HCN_channel"/>
</dbReference>
<dbReference type="InterPro" id="IPR003938">
    <property type="entry name" value="K_chnl_volt-dep_EAG/ELK/ERG"/>
</dbReference>
<dbReference type="InterPro" id="IPR014710">
    <property type="entry name" value="RmlC-like_jellyroll"/>
</dbReference>
<dbReference type="PANTHER" id="PTHR45689">
    <property type="entry name" value="I[[H]] CHANNEL, ISOFORM E"/>
    <property type="match status" value="1"/>
</dbReference>
<dbReference type="PANTHER" id="PTHR45689:SF11">
    <property type="entry name" value="POTASSIUM_SODIUM HYPERPOLARIZATION-ACTIVATED CYCLIC NUCLEOTIDE-GATED CHANNEL 2"/>
    <property type="match status" value="1"/>
</dbReference>
<dbReference type="Pfam" id="PF00027">
    <property type="entry name" value="cNMP_binding"/>
    <property type="match status" value="1"/>
</dbReference>
<dbReference type="Pfam" id="PF00520">
    <property type="entry name" value="Ion_trans"/>
    <property type="match status" value="1"/>
</dbReference>
<dbReference type="Pfam" id="PF08412">
    <property type="entry name" value="Ion_trans_N"/>
    <property type="match status" value="1"/>
</dbReference>
<dbReference type="PRINTS" id="PR01463">
    <property type="entry name" value="EAGCHANLFMLY"/>
</dbReference>
<dbReference type="SMART" id="SM00100">
    <property type="entry name" value="cNMP"/>
    <property type="match status" value="1"/>
</dbReference>
<dbReference type="SUPFAM" id="SSF51206">
    <property type="entry name" value="cAMP-binding domain-like"/>
    <property type="match status" value="1"/>
</dbReference>
<dbReference type="SUPFAM" id="SSF81324">
    <property type="entry name" value="Voltage-gated potassium channels"/>
    <property type="match status" value="1"/>
</dbReference>
<dbReference type="PROSITE" id="PS00888">
    <property type="entry name" value="CNMP_BINDING_1"/>
    <property type="match status" value="1"/>
</dbReference>
<dbReference type="PROSITE" id="PS50042">
    <property type="entry name" value="CNMP_BINDING_3"/>
    <property type="match status" value="1"/>
</dbReference>
<feature type="chain" id="PRO_0000054112" description="Potassium/sodium hyperpolarization-activated cyclic nucleotide-gated channel 2">
    <location>
        <begin position="1"/>
        <end position="863"/>
    </location>
</feature>
<feature type="topological domain" description="Cytoplasmic" evidence="1">
    <location>
        <begin position="1"/>
        <end position="188"/>
    </location>
</feature>
<feature type="transmembrane region" description="Helical; Name=Segment S1" evidence="1">
    <location>
        <begin position="189"/>
        <end position="209"/>
    </location>
</feature>
<feature type="topological domain" description="Extracellular" evidence="1">
    <location>
        <begin position="210"/>
        <end position="213"/>
    </location>
</feature>
<feature type="transmembrane region" description="Helical; Name=Segment S2" evidence="1">
    <location>
        <begin position="214"/>
        <end position="234"/>
    </location>
</feature>
<feature type="topological domain" description="Cytoplasmic" evidence="1">
    <location>
        <begin position="235"/>
        <end position="261"/>
    </location>
</feature>
<feature type="transmembrane region" description="Helical; Name=Segment S3" evidence="1">
    <location>
        <begin position="262"/>
        <end position="282"/>
    </location>
</feature>
<feature type="topological domain" description="Extracellular" evidence="1">
    <location>
        <begin position="283"/>
        <end position="290"/>
    </location>
</feature>
<feature type="transmembrane region" description="Helical; Voltage-sensor; Name=Segment S4" evidence="1">
    <location>
        <begin position="291"/>
        <end position="311"/>
    </location>
</feature>
<feature type="topological domain" description="Cytoplasmic" evidence="1">
    <location>
        <begin position="312"/>
        <end position="342"/>
    </location>
</feature>
<feature type="transmembrane region" description="Helical; Name=Segment S5" evidence="1">
    <location>
        <begin position="343"/>
        <end position="363"/>
    </location>
</feature>
<feature type="topological domain" description="Extracellular" evidence="1">
    <location>
        <begin position="364"/>
        <end position="386"/>
    </location>
</feature>
<feature type="intramembrane region" description="Pore-forming; Name=Segment H5" evidence="1">
    <location>
        <begin position="387"/>
        <end position="408"/>
    </location>
</feature>
<feature type="topological domain" description="Extracellular" evidence="1">
    <location>
        <begin position="409"/>
        <end position="413"/>
    </location>
</feature>
<feature type="transmembrane region" description="Helical; Name=Segment S6" evidence="1">
    <location>
        <begin position="414"/>
        <end position="434"/>
    </location>
</feature>
<feature type="topological domain" description="Cytoplasmic" evidence="1">
    <location>
        <begin position="435"/>
        <end position="863"/>
    </location>
</feature>
<feature type="region of interest" description="Disordered" evidence="5">
    <location>
        <begin position="1"/>
        <end position="131"/>
    </location>
</feature>
<feature type="region of interest" description="Involved in subunit assembly">
    <location>
        <begin position="131"/>
        <end position="182"/>
    </location>
</feature>
<feature type="region of interest" description="Disordered" evidence="5">
    <location>
        <begin position="730"/>
        <end position="863"/>
    </location>
</feature>
<feature type="compositionally biased region" description="Gly residues" evidence="5">
    <location>
        <begin position="1"/>
        <end position="10"/>
    </location>
</feature>
<feature type="compositionally biased region" description="Pro residues" evidence="5">
    <location>
        <begin position="17"/>
        <end position="47"/>
    </location>
</feature>
<feature type="compositionally biased region" description="Low complexity" evidence="5">
    <location>
        <begin position="106"/>
        <end position="128"/>
    </location>
</feature>
<feature type="compositionally biased region" description="Pro residues" evidence="5">
    <location>
        <begin position="734"/>
        <end position="755"/>
    </location>
</feature>
<feature type="compositionally biased region" description="Low complexity" evidence="5">
    <location>
        <begin position="756"/>
        <end position="765"/>
    </location>
</feature>
<feature type="compositionally biased region" description="Low complexity" evidence="5">
    <location>
        <begin position="778"/>
        <end position="800"/>
    </location>
</feature>
<feature type="compositionally biased region" description="Low complexity" evidence="5">
    <location>
        <begin position="808"/>
        <end position="834"/>
    </location>
</feature>
<feature type="binding site" evidence="19 20 31">
    <location>
        <position position="581"/>
    </location>
    <ligand>
        <name>3',5'-cyclic AMP</name>
        <dbReference type="ChEBI" id="CHEBI:58165"/>
    </ligand>
</feature>
<feature type="binding site" evidence="19 20 31">
    <location>
        <position position="582"/>
    </location>
    <ligand>
        <name>3',5'-cyclic AMP</name>
        <dbReference type="ChEBI" id="CHEBI:58165"/>
    </ligand>
</feature>
<feature type="binding site" evidence="19 20 31">
    <location>
        <position position="584"/>
    </location>
    <ligand>
        <name>3',5'-cyclic AMP</name>
        <dbReference type="ChEBI" id="CHEBI:58165"/>
    </ligand>
</feature>
<feature type="binding site" evidence="19 20 31">
    <location>
        <position position="591"/>
    </location>
    <ligand>
        <name>3',5'-cyclic AMP</name>
        <dbReference type="ChEBI" id="CHEBI:58165"/>
    </ligand>
</feature>
<feature type="binding site" evidence="19 20 31">
    <location>
        <position position="592"/>
    </location>
    <ligand>
        <name>3',5'-cyclic AMP</name>
        <dbReference type="ChEBI" id="CHEBI:58165"/>
    </ligand>
</feature>
<feature type="binding site" evidence="19 20 31">
    <location>
        <position position="632"/>
    </location>
    <ligand>
        <name>3',5'-cyclic AMP</name>
        <dbReference type="ChEBI" id="CHEBI:58165"/>
    </ligand>
</feature>
<feature type="modified residue" description="Phosphoserine" evidence="39">
    <location>
        <position position="119"/>
    </location>
</feature>
<feature type="modified residue" description="Phosphoserine" evidence="2">
    <location>
        <position position="134"/>
    </location>
</feature>
<feature type="modified residue" description="Phosphoserine; by PKG/PRKG2" evidence="21">
    <location>
        <position position="641"/>
    </location>
</feature>
<feature type="modified residue" description="Phosphoserine" evidence="2">
    <location>
        <position position="726"/>
    </location>
</feature>
<feature type="modified residue" description="Omega-N-methylarginine" evidence="40">
    <location>
        <position position="728"/>
    </location>
</feature>
<feature type="modified residue" description="Phosphoserine" evidence="39">
    <location>
        <position position="743"/>
    </location>
</feature>
<feature type="modified residue" description="Phosphoserine" evidence="39">
    <location>
        <position position="750"/>
    </location>
</feature>
<feature type="modified residue" description="Phosphoserine" evidence="39">
    <location>
        <position position="757"/>
    </location>
</feature>
<feature type="modified residue" description="Phosphoserine" evidence="39">
    <location>
        <position position="840"/>
    </location>
</feature>
<feature type="modified residue" description="Phosphoserine" evidence="39">
    <location>
        <position position="842"/>
    </location>
</feature>
<feature type="modified residue" description="Phosphoserine" evidence="39">
    <location>
        <position position="847"/>
    </location>
</feature>
<feature type="glycosylation site" description="N-linked (GlcNAc...) asparagine" evidence="15">
    <location>
        <position position="380"/>
    </location>
</feature>
<feature type="mutagenesis site" description="Abolishes surface expression and channel activity." evidence="6">
    <original>D</original>
    <variation>N</variation>
    <location>
        <position position="225"/>
    </location>
</feature>
<feature type="mutagenesis site" description="Reduces surface expression and abolishes channel activity." evidence="6">
    <original>D</original>
    <variation>N</variation>
    <location>
        <position position="231"/>
    </location>
</feature>
<feature type="mutagenesis site" description="Reduces surface expression and abolishes channel activity." evidence="6">
    <original>D</original>
    <variation>N</variation>
    <location>
        <position position="267"/>
    </location>
</feature>
<feature type="mutagenesis site" description="Reduces surface expression and abolishes channel activity." evidence="6">
    <original>D</original>
    <variation>N</variation>
    <location>
        <position position="275"/>
    </location>
</feature>
<feature type="mutagenesis site" description="Shifts voltage dependence of activation to more negative values." evidence="6">
    <original>K</original>
    <variation>Q</variation>
    <location>
        <position position="291"/>
    </location>
</feature>
<feature type="mutagenesis site" description="Shifts voltage dependence of activation to more negative values." evidence="6">
    <original>R</original>
    <variation>Q</variation>
    <location>
        <position position="294"/>
    </location>
</feature>
<feature type="mutagenesis site" description="Shifts voltage dependence of activation to more negative values." evidence="6">
    <original>R</original>
    <variation>Q</variation>
    <location>
        <position position="297"/>
    </location>
</feature>
<feature type="mutagenesis site" description="Shifts voltage dependence of activation to more negative values." evidence="6">
    <original>R</original>
    <variation>Q</variation>
    <location>
        <position position="300"/>
    </location>
</feature>
<feature type="mutagenesis site" description="Decreases current amplitude." evidence="6">
    <original>K</original>
    <variation>Q</variation>
    <location>
        <position position="303"/>
    </location>
</feature>
<feature type="mutagenesis site" description="Decreases current amplitude." evidence="6 11">
    <original>S</original>
    <variation>Q</variation>
    <location>
        <position position="306"/>
    </location>
</feature>
<feature type="mutagenesis site" description="Abolishes surface expression and channel activity." evidence="6">
    <original>R</original>
    <variation>Q</variation>
    <location>
        <position position="309"/>
    </location>
</feature>
<feature type="mutagenesis site" description="Reduces surface expression and decreases current amplitude." evidence="6">
    <original>R</original>
    <variation>Q</variation>
    <location>
        <position position="312"/>
    </location>
</feature>
<feature type="mutagenesis site" description="Reduces surface expression and abolishes channel activity." evidence="6">
    <original>R</original>
    <variation>Q</variation>
    <location>
        <position position="315"/>
    </location>
</feature>
<feature type="mutagenesis site" description="Reduces surface expression and disrupts channel closure." evidence="6 10">
    <original>R</original>
    <variation>Q</variation>
    <location>
        <position position="318"/>
    </location>
</feature>
<feature type="mutagenesis site" description="Shifts voltage dependence of activation to more positive values and abolishes pH-sensitivity." evidence="7">
    <original>H</original>
    <variation>E</variation>
    <location>
        <position position="321"/>
    </location>
</feature>
<feature type="mutagenesis site" description="Abolishes pH-sensitivity." evidence="7">
    <original>H</original>
    <variation>Q</variation>
    <location>
        <position position="321"/>
    </location>
</feature>
<feature type="mutagenesis site" description="Abolishes pH-sensitivity." evidence="7">
    <original>H</original>
    <variation>R</variation>
    <location>
        <position position="321"/>
    </location>
</feature>
<feature type="mutagenesis site" description="Disrupts channel closure." evidence="10">
    <original>E</original>
    <variation>Q</variation>
    <location>
        <position position="324"/>
    </location>
</feature>
<feature type="mutagenesis site" description="Disrupts channel closure." evidence="10">
    <original>Y</original>
    <variation>A</variation>
    <location>
        <position position="331"/>
    </location>
</feature>
<feature type="mutagenesis site" description="Disrupts channel closure." evidence="10">
    <original>Y</original>
    <variation>S</variation>
    <location>
        <position position="331"/>
    </location>
</feature>
<feature type="mutagenesis site" description="Disrupts channel closure." evidence="10">
    <original>R</original>
    <variation>Q</variation>
    <location>
        <position position="339"/>
    </location>
</feature>
<feature type="mutagenesis site" description="Abolishes cell membrane localization." evidence="15">
    <original>N</original>
    <variation>Q</variation>
    <location>
        <position position="380"/>
    </location>
</feature>
<feature type="mutagenesis site" description="Shifts channel activation to more negative voltage, slows channel opening and speeds up channel closure. Reduces sensitivity to activation by cAMP." evidence="24">
    <original>S</original>
    <variation>R</variation>
    <location>
        <position position="594"/>
    </location>
</feature>
<feature type="mutagenesis site" description="Reduced the response to cAMP." evidence="26">
    <original>D</original>
    <variation>A</variation>
    <location>
        <position position="671"/>
    </location>
</feature>
<feature type="sequence conflict" description="In Ref. 2; AAC40125." evidence="28" ref="2">
    <original>F</original>
    <variation>S</variation>
    <location>
        <position position="486"/>
    </location>
</feature>
<feature type="sequence conflict" description="In Ref. 2; AAC40125." evidence="28" ref="2">
    <original>I</original>
    <variation>T</variation>
    <location>
        <position position="642"/>
    </location>
</feature>
<feature type="helix" evidence="42">
    <location>
        <begin position="444"/>
        <end position="462"/>
    </location>
</feature>
<feature type="helix" evidence="42">
    <location>
        <begin position="467"/>
        <end position="481"/>
    </location>
</feature>
<feature type="helix" evidence="42">
    <location>
        <begin position="488"/>
        <end position="494"/>
    </location>
</feature>
<feature type="helix" evidence="42">
    <location>
        <begin position="497"/>
        <end position="507"/>
    </location>
</feature>
<feature type="helix" evidence="42">
    <location>
        <begin position="509"/>
        <end position="513"/>
    </location>
</feature>
<feature type="helix" evidence="42">
    <location>
        <begin position="516"/>
        <end position="519"/>
    </location>
</feature>
<feature type="helix" evidence="42">
    <location>
        <begin position="523"/>
        <end position="532"/>
    </location>
</feature>
<feature type="strand" evidence="42">
    <location>
        <begin position="534"/>
        <end position="538"/>
    </location>
</feature>
<feature type="strand" evidence="42">
    <location>
        <begin position="543"/>
        <end position="545"/>
    </location>
</feature>
<feature type="strand" evidence="42">
    <location>
        <begin position="553"/>
        <end position="559"/>
    </location>
</feature>
<feature type="strand" evidence="42">
    <location>
        <begin position="561"/>
        <end position="565"/>
    </location>
</feature>
<feature type="strand" evidence="41">
    <location>
        <begin position="567"/>
        <end position="569"/>
    </location>
</feature>
<feature type="strand" evidence="42">
    <location>
        <begin position="572"/>
        <end position="575"/>
    </location>
</feature>
<feature type="strand" evidence="44">
    <location>
        <begin position="579"/>
        <end position="581"/>
    </location>
</feature>
<feature type="helix" evidence="42">
    <location>
        <begin position="582"/>
        <end position="587"/>
    </location>
</feature>
<feature type="strand" evidence="43">
    <location>
        <begin position="588"/>
        <end position="590"/>
    </location>
</feature>
<feature type="strand" evidence="42">
    <location>
        <begin position="592"/>
        <end position="599"/>
    </location>
</feature>
<feature type="strand" evidence="42">
    <location>
        <begin position="601"/>
        <end position="607"/>
    </location>
</feature>
<feature type="helix" evidence="42">
    <location>
        <begin position="608"/>
        <end position="617"/>
    </location>
</feature>
<feature type="helix" evidence="42">
    <location>
        <begin position="619"/>
        <end position="621"/>
    </location>
</feature>
<feature type="helix" evidence="42">
    <location>
        <begin position="622"/>
        <end position="635"/>
    </location>
</feature>
<organism>
    <name type="scientific">Mus musculus</name>
    <name type="common">Mouse</name>
    <dbReference type="NCBI Taxonomy" id="10090"/>
    <lineage>
        <taxon>Eukaryota</taxon>
        <taxon>Metazoa</taxon>
        <taxon>Chordata</taxon>
        <taxon>Craniata</taxon>
        <taxon>Vertebrata</taxon>
        <taxon>Euteleostomi</taxon>
        <taxon>Mammalia</taxon>
        <taxon>Eutheria</taxon>
        <taxon>Euarchontoglires</taxon>
        <taxon>Glires</taxon>
        <taxon>Rodentia</taxon>
        <taxon>Myomorpha</taxon>
        <taxon>Muroidea</taxon>
        <taxon>Muridae</taxon>
        <taxon>Murinae</taxon>
        <taxon>Mus</taxon>
        <taxon>Mus</taxon>
    </lineage>
</organism>
<evidence type="ECO:0000250" key="1">
    <source>
        <dbReference type="UniProtKB" id="O60741"/>
    </source>
</evidence>
<evidence type="ECO:0000250" key="2">
    <source>
        <dbReference type="UniProtKB" id="Q9JKA9"/>
    </source>
</evidence>
<evidence type="ECO:0000250" key="3">
    <source>
        <dbReference type="UniProtKB" id="Q9UL51"/>
    </source>
</evidence>
<evidence type="ECO:0000255" key="4"/>
<evidence type="ECO:0000256" key="5">
    <source>
        <dbReference type="SAM" id="MobiDB-lite"/>
    </source>
</evidence>
<evidence type="ECO:0000269" key="6">
    <source>
    </source>
</evidence>
<evidence type="ECO:0000269" key="7">
    <source>
    </source>
</evidence>
<evidence type="ECO:0000269" key="8">
    <source>
    </source>
</evidence>
<evidence type="ECO:0000269" key="9">
    <source>
    </source>
</evidence>
<evidence type="ECO:0000269" key="10">
    <source>
    </source>
</evidence>
<evidence type="ECO:0000269" key="11">
    <source>
    </source>
</evidence>
<evidence type="ECO:0000269" key="12">
    <source>
    </source>
</evidence>
<evidence type="ECO:0000269" key="13">
    <source>
    </source>
</evidence>
<evidence type="ECO:0000269" key="14">
    <source>
    </source>
</evidence>
<evidence type="ECO:0000269" key="15">
    <source>
    </source>
</evidence>
<evidence type="ECO:0000269" key="16">
    <source>
    </source>
</evidence>
<evidence type="ECO:0000269" key="17">
    <source>
    </source>
</evidence>
<evidence type="ECO:0000269" key="18">
    <source>
    </source>
</evidence>
<evidence type="ECO:0000269" key="19">
    <source>
    </source>
</evidence>
<evidence type="ECO:0000269" key="20">
    <source>
    </source>
</evidence>
<evidence type="ECO:0000269" key="21">
    <source>
    </source>
</evidence>
<evidence type="ECO:0000269" key="22">
    <source>
    </source>
</evidence>
<evidence type="ECO:0000269" key="23">
    <source>
    </source>
</evidence>
<evidence type="ECO:0000269" key="24">
    <source>
    </source>
</evidence>
<evidence type="ECO:0000269" key="25">
    <source>
    </source>
</evidence>
<evidence type="ECO:0000269" key="26">
    <source>
    </source>
</evidence>
<evidence type="ECO:0000269" key="27">
    <source>
    </source>
</evidence>
<evidence type="ECO:0000305" key="28"/>
<evidence type="ECO:0000305" key="29">
    <source>
    </source>
</evidence>
<evidence type="ECO:0000312" key="30">
    <source>
        <dbReference type="MGI" id="MGI:1298210"/>
    </source>
</evidence>
<evidence type="ECO:0007744" key="31">
    <source>
        <dbReference type="PDB" id="3BPZ"/>
    </source>
</evidence>
<evidence type="ECO:0007744" key="32">
    <source>
        <dbReference type="PDB" id="3ETQ"/>
    </source>
</evidence>
<evidence type="ECO:0007744" key="33">
    <source>
        <dbReference type="PDB" id="3FFQ"/>
    </source>
</evidence>
<evidence type="ECO:0007744" key="34">
    <source>
        <dbReference type="PDB" id="5KHG"/>
    </source>
</evidence>
<evidence type="ECO:0007744" key="35">
    <source>
        <dbReference type="PDB" id="5KHH"/>
    </source>
</evidence>
<evidence type="ECO:0007744" key="36">
    <source>
        <dbReference type="PDB" id="5KHI"/>
    </source>
</evidence>
<evidence type="ECO:0007744" key="37">
    <source>
        <dbReference type="PDB" id="5KHJ"/>
    </source>
</evidence>
<evidence type="ECO:0007744" key="38">
    <source>
        <dbReference type="PDB" id="5KHK"/>
    </source>
</evidence>
<evidence type="ECO:0007744" key="39">
    <source>
    </source>
</evidence>
<evidence type="ECO:0007744" key="40">
    <source>
    </source>
</evidence>
<evidence type="ECO:0007829" key="41">
    <source>
        <dbReference type="PDB" id="2Q0A"/>
    </source>
</evidence>
<evidence type="ECO:0007829" key="42">
    <source>
        <dbReference type="PDB" id="3BPZ"/>
    </source>
</evidence>
<evidence type="ECO:0007829" key="43">
    <source>
        <dbReference type="PDB" id="5KHH"/>
    </source>
</evidence>
<evidence type="ECO:0007829" key="44">
    <source>
        <dbReference type="PDB" id="5KHK"/>
    </source>
</evidence>
<gene>
    <name evidence="30" type="primary">Hcn2</name>
    <name type="synonym">Bcng2</name>
    <name type="synonym">Hac1</name>
</gene>